<sequence>MDRVLRDVFDYSYRDYILSWYGNLSRDDGQLYHLLLDDFWEIVKQIRQRLSHVDVVKVVCNDIVKALLTHFCDLKAATARHEEQPRPFVLHACLKDSHDEVRFLQTCSQVLVLCLLPSKDIQSLSLRTMLAEILTTKVLKPVVELLSNPDYINQMLLRQLEYREQMSEHHKRAYTYAPSYEDFIKLINSNSDVDFLKQLRYQIVVEIIQATTISSFPQLKRHKGKESAAMKTDLLRARNMKRYINQLTVAKKQCEKRIRILGGPAYDQQEDGASDEGEGPQSQKILQFEDIMTNPFYRERFGTYMERIDKRALVGFWESAEHLKNANKSEIPQLVSEMYQNFFVESKEISVEKSLYKEIQQCLVGNRGIEVFSKIQADVSEVLRERYYPSFLVSDLYEKLMREEEEEEPDAQLASEKDELGSGGEAGEEAVEGTSGVSDPASFAVIKLRELNEKLEYKRQALSSIQNAPKPDKKIISKLKDEILLIEKECTALQLHMARTDWWCENLGLWRASITSAEVTEENGEQMPCYFVRVNLQEVGGVETKNWTVPRRLSEFQNLHRKLSECVPSLKKVQLPSLSKLPFKSIDHKFLGKSRNQLNAFLQNLLSDERLFQSEALYAFLSPSPDYLKVIDVQGKKTSFSLSSFLEKLPRDFFSHQEEEIEEDSDLSDYGDDVDGKKDSLAEPCFMLIGEIFELRGMFKWVRRTLIALVQVTFGRTINKQIRDTVSWISSEQMLVYYISAFRDAFWPNGKLAPPTRIRSVAQSQETKQRAQQKLLENIPDTLQSLVGQQNARHGIIKIFKALQETKANKHLLYVLMELLLTELCPELRAHLDQFKAGQV</sequence>
<feature type="chain" id="PRO_0000352799" description="Sorting nexin-25">
    <location>
        <begin position="1"/>
        <end position="840"/>
    </location>
</feature>
<feature type="domain" description="PXA" evidence="4 6">
    <location>
        <begin position="1"/>
        <end position="164"/>
    </location>
</feature>
<feature type="domain" description="RGS" evidence="5">
    <location>
        <begin position="287"/>
        <end position="401"/>
    </location>
</feature>
<feature type="domain" description="PX" evidence="4">
    <location>
        <begin position="508"/>
        <end position="628"/>
    </location>
</feature>
<feature type="region of interest" description="Disordered" evidence="7">
    <location>
        <begin position="404"/>
        <end position="437"/>
    </location>
</feature>
<feature type="coiled-coil region" evidence="3">
    <location>
        <begin position="446"/>
        <end position="494"/>
    </location>
</feature>
<feature type="modified residue" description="Phosphoserine" evidence="2">
    <location>
        <position position="665"/>
    </location>
</feature>
<feature type="sequence conflict" description="In Ref. 3; CJ047380." evidence="8" ref="3">
    <original>S</original>
    <variation>T</variation>
    <location>
        <position position="25"/>
    </location>
</feature>
<feature type="sequence conflict" description="In Ref. 3; CJ047380." evidence="8" ref="3">
    <original>D</original>
    <variation>H</variation>
    <location>
        <position position="27"/>
    </location>
</feature>
<feature type="sequence conflict" description="In Ref. 3; CJ047380." evidence="8" ref="3">
    <original>Q</original>
    <variation>H</variation>
    <location>
        <position position="45"/>
    </location>
</feature>
<feature type="sequence conflict" description="In Ref. 3; CJ047380." evidence="8" ref="3">
    <original>Q</original>
    <variation>H</variation>
    <location>
        <position position="48"/>
    </location>
</feature>
<feature type="sequence conflict" description="In Ref. 3; CJ047380." evidence="8" ref="3">
    <original>K</original>
    <variation>Q</variation>
    <location>
        <position position="57"/>
    </location>
</feature>
<feature type="sequence conflict" description="In Ref. 3; CJ047380." evidence="8" ref="3">
    <original>N</original>
    <variation>Y</variation>
    <location>
        <position position="61"/>
    </location>
</feature>
<feature type="sequence conflict" description="In Ref. 3; CJ047380." evidence="8" ref="3">
    <original>HF</original>
    <variation>TS</variation>
    <location>
        <begin position="70"/>
        <end position="71"/>
    </location>
</feature>
<feature type="sequence conflict" description="In Ref. 3; CJ047380." evidence="8" ref="3">
    <original>D</original>
    <variation>E</variation>
    <location>
        <position position="73"/>
    </location>
</feature>
<feature type="sequence conflict" description="In Ref. 1; AAT98626." evidence="8" ref="1">
    <original>H</original>
    <variation>D</variation>
    <location>
        <position position="322"/>
    </location>
</feature>
<feature type="sequence conflict" description="In Ref. 1; AAT98626." evidence="8" ref="1">
    <original>E</original>
    <variation>D</variation>
    <location>
        <position position="385"/>
    </location>
</feature>
<feature type="sequence conflict" description="In Ref. 1; AAT98626." evidence="8" ref="1">
    <original>G</original>
    <variation>S</variation>
    <location>
        <position position="427"/>
    </location>
</feature>
<feature type="sequence conflict" description="In Ref. 1; AAT98626." evidence="8" ref="1">
    <original>L</original>
    <variation>P</variation>
    <location>
        <position position="646"/>
    </location>
</feature>
<feature type="helix" evidence="9">
    <location>
        <begin position="288"/>
        <end position="293"/>
    </location>
</feature>
<feature type="helix" evidence="9">
    <location>
        <begin position="295"/>
        <end position="306"/>
    </location>
</feature>
<feature type="turn" evidence="9">
    <location>
        <begin position="307"/>
        <end position="309"/>
    </location>
</feature>
<feature type="helix" evidence="9">
    <location>
        <begin position="311"/>
        <end position="325"/>
    </location>
</feature>
<feature type="helix" evidence="9">
    <location>
        <begin position="328"/>
        <end position="330"/>
    </location>
</feature>
<feature type="helix" evidence="9">
    <location>
        <begin position="331"/>
        <end position="343"/>
    </location>
</feature>
<feature type="helix" evidence="9">
    <location>
        <begin position="353"/>
        <end position="362"/>
    </location>
</feature>
<feature type="turn" evidence="9">
    <location>
        <begin position="363"/>
        <end position="365"/>
    </location>
</feature>
<feature type="helix" evidence="9">
    <location>
        <begin position="370"/>
        <end position="386"/>
    </location>
</feature>
<feature type="helix" evidence="9">
    <location>
        <begin position="388"/>
        <end position="391"/>
    </location>
</feature>
<feature type="helix" evidence="9">
    <location>
        <begin position="395"/>
        <end position="402"/>
    </location>
</feature>
<feature type="helix" evidence="10">
    <location>
        <begin position="507"/>
        <end position="509"/>
    </location>
</feature>
<feature type="strand" evidence="10">
    <location>
        <begin position="511"/>
        <end position="522"/>
    </location>
</feature>
<feature type="strand" evidence="10">
    <location>
        <begin position="525"/>
        <end position="535"/>
    </location>
</feature>
<feature type="strand" evidence="10">
    <location>
        <begin position="541"/>
        <end position="543"/>
    </location>
</feature>
<feature type="strand" evidence="10">
    <location>
        <begin position="546"/>
        <end position="552"/>
    </location>
</feature>
<feature type="helix" evidence="10">
    <location>
        <begin position="553"/>
        <end position="566"/>
    </location>
</feature>
<feature type="helix" evidence="10">
    <location>
        <begin position="568"/>
        <end position="572"/>
    </location>
</feature>
<feature type="helix" evidence="10">
    <location>
        <begin position="588"/>
        <end position="606"/>
    </location>
</feature>
<feature type="helix" evidence="10">
    <location>
        <begin position="609"/>
        <end position="611"/>
    </location>
</feature>
<feature type="helix" evidence="10">
    <location>
        <begin position="615"/>
        <end position="621"/>
    </location>
</feature>
<accession>Q3ZT31</accession>
<accession>E9QMG5</accession>
<accession>Q6PGF1</accession>
<gene>
    <name type="primary">Snx25</name>
</gene>
<organism>
    <name type="scientific">Mus musculus</name>
    <name type="common">Mouse</name>
    <dbReference type="NCBI Taxonomy" id="10090"/>
    <lineage>
        <taxon>Eukaryota</taxon>
        <taxon>Metazoa</taxon>
        <taxon>Chordata</taxon>
        <taxon>Craniata</taxon>
        <taxon>Vertebrata</taxon>
        <taxon>Euteleostomi</taxon>
        <taxon>Mammalia</taxon>
        <taxon>Eutheria</taxon>
        <taxon>Euarchontoglires</taxon>
        <taxon>Glires</taxon>
        <taxon>Rodentia</taxon>
        <taxon>Myomorpha</taxon>
        <taxon>Muroidea</taxon>
        <taxon>Muridae</taxon>
        <taxon>Murinae</taxon>
        <taxon>Mus</taxon>
        <taxon>Mus</taxon>
    </lineage>
</organism>
<keyword id="KW-0002">3D-structure</keyword>
<keyword id="KW-0175">Coiled coil</keyword>
<keyword id="KW-0967">Endosome</keyword>
<keyword id="KW-0472">Membrane</keyword>
<keyword id="KW-0597">Phosphoprotein</keyword>
<keyword id="KW-0653">Protein transport</keyword>
<keyword id="KW-1185">Reference proteome</keyword>
<keyword id="KW-0813">Transport</keyword>
<evidence type="ECO:0000250" key="1"/>
<evidence type="ECO:0000250" key="2">
    <source>
        <dbReference type="UniProtKB" id="Q9H3E2"/>
    </source>
</evidence>
<evidence type="ECO:0000255" key="3"/>
<evidence type="ECO:0000255" key="4">
    <source>
        <dbReference type="PROSITE-ProRule" id="PRU00147"/>
    </source>
</evidence>
<evidence type="ECO:0000255" key="5">
    <source>
        <dbReference type="PROSITE-ProRule" id="PRU00171"/>
    </source>
</evidence>
<evidence type="ECO:0000255" key="6">
    <source>
        <dbReference type="PROSITE-ProRule" id="PRU00553"/>
    </source>
</evidence>
<evidence type="ECO:0000256" key="7">
    <source>
        <dbReference type="SAM" id="MobiDB-lite"/>
    </source>
</evidence>
<evidence type="ECO:0000305" key="8"/>
<evidence type="ECO:0007829" key="9">
    <source>
        <dbReference type="PDB" id="7WF8"/>
    </source>
</evidence>
<evidence type="ECO:0007829" key="10">
    <source>
        <dbReference type="PDB" id="8HQL"/>
    </source>
</evidence>
<comment type="function">
    <text evidence="1">May be involved in several stages of intracellular trafficking.</text>
</comment>
<comment type="subcellular location">
    <subcellularLocation>
        <location evidence="1">Endosome membrane</location>
        <topology evidence="1">Peripheral membrane protein</topology>
    </subcellularLocation>
</comment>
<comment type="similarity">
    <text evidence="8">Belongs to the sorting nexin family.</text>
</comment>
<comment type="sequence caution" evidence="8">
    <conflict type="miscellaneous discrepancy">
        <sequence resource="EMBL-CDS" id="AAT98626"/>
    </conflict>
    <text>Intron retention.</text>
</comment>
<name>SNX25_MOUSE</name>
<reference key="1">
    <citation type="submission" date="2004-04" db="EMBL/GenBank/DDBJ databases">
        <authorList>
            <person name="Hao X."/>
            <person name="Chang Z."/>
            <person name="Zhu S."/>
        </authorList>
    </citation>
    <scope>NUCLEOTIDE SEQUENCE [MRNA]</scope>
    <source>
        <strain>BALB/cJ</strain>
    </source>
</reference>
<reference key="2">
    <citation type="journal article" date="2009" name="PLoS Biol.">
        <title>Lineage-specific biology revealed by a finished genome assembly of the mouse.</title>
        <authorList>
            <person name="Church D.M."/>
            <person name="Goodstadt L."/>
            <person name="Hillier L.W."/>
            <person name="Zody M.C."/>
            <person name="Goldstein S."/>
            <person name="She X."/>
            <person name="Bult C.J."/>
            <person name="Agarwala R."/>
            <person name="Cherry J.L."/>
            <person name="DiCuccio M."/>
            <person name="Hlavina W."/>
            <person name="Kapustin Y."/>
            <person name="Meric P."/>
            <person name="Maglott D."/>
            <person name="Birtle Z."/>
            <person name="Marques A.C."/>
            <person name="Graves T."/>
            <person name="Zhou S."/>
            <person name="Teague B."/>
            <person name="Potamousis K."/>
            <person name="Churas C."/>
            <person name="Place M."/>
            <person name="Herschleb J."/>
            <person name="Runnheim R."/>
            <person name="Forrest D."/>
            <person name="Amos-Landgraf J."/>
            <person name="Schwartz D.C."/>
            <person name="Cheng Z."/>
            <person name="Lindblad-Toh K."/>
            <person name="Eichler E.E."/>
            <person name="Ponting C.P."/>
        </authorList>
    </citation>
    <scope>NUCLEOTIDE SEQUENCE [LARGE SCALE GENOMIC DNA]</scope>
    <source>
        <strain>C57BL/6J</strain>
    </source>
</reference>
<reference key="3">
    <citation type="journal article" date="2005" name="Science">
        <title>The transcriptional landscape of the mammalian genome.</title>
        <authorList>
            <person name="Carninci P."/>
            <person name="Kasukawa T."/>
            <person name="Katayama S."/>
            <person name="Gough J."/>
            <person name="Frith M.C."/>
            <person name="Maeda N."/>
            <person name="Oyama R."/>
            <person name="Ravasi T."/>
            <person name="Lenhard B."/>
            <person name="Wells C."/>
            <person name="Kodzius R."/>
            <person name="Shimokawa K."/>
            <person name="Bajic V.B."/>
            <person name="Brenner S.E."/>
            <person name="Batalov S."/>
            <person name="Forrest A.R."/>
            <person name="Zavolan M."/>
            <person name="Davis M.J."/>
            <person name="Wilming L.G."/>
            <person name="Aidinis V."/>
            <person name="Allen J.E."/>
            <person name="Ambesi-Impiombato A."/>
            <person name="Apweiler R."/>
            <person name="Aturaliya R.N."/>
            <person name="Bailey T.L."/>
            <person name="Bansal M."/>
            <person name="Baxter L."/>
            <person name="Beisel K.W."/>
            <person name="Bersano T."/>
            <person name="Bono H."/>
            <person name="Chalk A.M."/>
            <person name="Chiu K.P."/>
            <person name="Choudhary V."/>
            <person name="Christoffels A."/>
            <person name="Clutterbuck D.R."/>
            <person name="Crowe M.L."/>
            <person name="Dalla E."/>
            <person name="Dalrymple B.P."/>
            <person name="de Bono B."/>
            <person name="Della Gatta G."/>
            <person name="di Bernardo D."/>
            <person name="Down T."/>
            <person name="Engstrom P."/>
            <person name="Fagiolini M."/>
            <person name="Faulkner G."/>
            <person name="Fletcher C.F."/>
            <person name="Fukushima T."/>
            <person name="Furuno M."/>
            <person name="Futaki S."/>
            <person name="Gariboldi M."/>
            <person name="Georgii-Hemming P."/>
            <person name="Gingeras T.R."/>
            <person name="Gojobori T."/>
            <person name="Green R.E."/>
            <person name="Gustincich S."/>
            <person name="Harbers M."/>
            <person name="Hayashi Y."/>
            <person name="Hensch T.K."/>
            <person name="Hirokawa N."/>
            <person name="Hill D."/>
            <person name="Huminiecki L."/>
            <person name="Iacono M."/>
            <person name="Ikeo K."/>
            <person name="Iwama A."/>
            <person name="Ishikawa T."/>
            <person name="Jakt M."/>
            <person name="Kanapin A."/>
            <person name="Katoh M."/>
            <person name="Kawasawa Y."/>
            <person name="Kelso J."/>
            <person name="Kitamura H."/>
            <person name="Kitano H."/>
            <person name="Kollias G."/>
            <person name="Krishnan S.P."/>
            <person name="Kruger A."/>
            <person name="Kummerfeld S.K."/>
            <person name="Kurochkin I.V."/>
            <person name="Lareau L.F."/>
            <person name="Lazarevic D."/>
            <person name="Lipovich L."/>
            <person name="Liu J."/>
            <person name="Liuni S."/>
            <person name="McWilliam S."/>
            <person name="Madan Babu M."/>
            <person name="Madera M."/>
            <person name="Marchionni L."/>
            <person name="Matsuda H."/>
            <person name="Matsuzawa S."/>
            <person name="Miki H."/>
            <person name="Mignone F."/>
            <person name="Miyake S."/>
            <person name="Morris K."/>
            <person name="Mottagui-Tabar S."/>
            <person name="Mulder N."/>
            <person name="Nakano N."/>
            <person name="Nakauchi H."/>
            <person name="Ng P."/>
            <person name="Nilsson R."/>
            <person name="Nishiguchi S."/>
            <person name="Nishikawa S."/>
            <person name="Nori F."/>
            <person name="Ohara O."/>
            <person name="Okazaki Y."/>
            <person name="Orlando V."/>
            <person name="Pang K.C."/>
            <person name="Pavan W.J."/>
            <person name="Pavesi G."/>
            <person name="Pesole G."/>
            <person name="Petrovsky N."/>
            <person name="Piazza S."/>
            <person name="Reed J."/>
            <person name="Reid J.F."/>
            <person name="Ring B.Z."/>
            <person name="Ringwald M."/>
            <person name="Rost B."/>
            <person name="Ruan Y."/>
            <person name="Salzberg S.L."/>
            <person name="Sandelin A."/>
            <person name="Schneider C."/>
            <person name="Schoenbach C."/>
            <person name="Sekiguchi K."/>
            <person name="Semple C.A."/>
            <person name="Seno S."/>
            <person name="Sessa L."/>
            <person name="Sheng Y."/>
            <person name="Shibata Y."/>
            <person name="Shimada H."/>
            <person name="Shimada K."/>
            <person name="Silva D."/>
            <person name="Sinclair B."/>
            <person name="Sperling S."/>
            <person name="Stupka E."/>
            <person name="Sugiura K."/>
            <person name="Sultana R."/>
            <person name="Takenaka Y."/>
            <person name="Taki K."/>
            <person name="Tammoja K."/>
            <person name="Tan S.L."/>
            <person name="Tang S."/>
            <person name="Taylor M.S."/>
            <person name="Tegner J."/>
            <person name="Teichmann S.A."/>
            <person name="Ueda H.R."/>
            <person name="van Nimwegen E."/>
            <person name="Verardo R."/>
            <person name="Wei C.L."/>
            <person name="Yagi K."/>
            <person name="Yamanishi H."/>
            <person name="Zabarovsky E."/>
            <person name="Zhu S."/>
            <person name="Zimmer A."/>
            <person name="Hide W."/>
            <person name="Bult C."/>
            <person name="Grimmond S.M."/>
            <person name="Teasdale R.D."/>
            <person name="Liu E.T."/>
            <person name="Brusic V."/>
            <person name="Quackenbush J."/>
            <person name="Wahlestedt C."/>
            <person name="Mattick J.S."/>
            <person name="Hume D.A."/>
            <person name="Kai C."/>
            <person name="Sasaki D."/>
            <person name="Tomaru Y."/>
            <person name="Fukuda S."/>
            <person name="Kanamori-Katayama M."/>
            <person name="Suzuki M."/>
            <person name="Aoki J."/>
            <person name="Arakawa T."/>
            <person name="Iida J."/>
            <person name="Imamura K."/>
            <person name="Itoh M."/>
            <person name="Kato T."/>
            <person name="Kawaji H."/>
            <person name="Kawagashira N."/>
            <person name="Kawashima T."/>
            <person name="Kojima M."/>
            <person name="Kondo S."/>
            <person name="Konno H."/>
            <person name="Nakano K."/>
            <person name="Ninomiya N."/>
            <person name="Nishio T."/>
            <person name="Okada M."/>
            <person name="Plessy C."/>
            <person name="Shibata K."/>
            <person name="Shiraki T."/>
            <person name="Suzuki S."/>
            <person name="Tagami M."/>
            <person name="Waki K."/>
            <person name="Watahiki A."/>
            <person name="Okamura-Oho Y."/>
            <person name="Suzuki H."/>
            <person name="Kawai J."/>
            <person name="Hayashizaki Y."/>
        </authorList>
    </citation>
    <scope>NUCLEOTIDE SEQUENCE [LARGE SCALE MRNA] OF 1-74</scope>
    <source>
        <tissue>Testis</tissue>
    </source>
</reference>
<reference key="4">
    <citation type="journal article" date="2004" name="Genome Res.">
        <title>The status, quality, and expansion of the NIH full-length cDNA project: the Mammalian Gene Collection (MGC).</title>
        <authorList>
            <consortium name="The MGC Project Team"/>
        </authorList>
    </citation>
    <scope>NUCLEOTIDE SEQUENCE [LARGE SCALE MRNA] OF 64-840</scope>
    <source>
        <strain>C57BL/6J</strain>
        <tissue>Brain</tissue>
    </source>
</reference>
<reference key="5">
    <citation type="journal article" date="2010" name="Cell">
        <title>A tissue-specific atlas of mouse protein phosphorylation and expression.</title>
        <authorList>
            <person name="Huttlin E.L."/>
            <person name="Jedrychowski M.P."/>
            <person name="Elias J.E."/>
            <person name="Goswami T."/>
            <person name="Rad R."/>
            <person name="Beausoleil S.A."/>
            <person name="Villen J."/>
            <person name="Haas W."/>
            <person name="Sowa M.E."/>
            <person name="Gygi S.P."/>
        </authorList>
    </citation>
    <scope>IDENTIFICATION BY MASS SPECTROMETRY [LARGE SCALE ANALYSIS]</scope>
    <source>
        <tissue>Lung</tissue>
        <tissue>Testis</tissue>
    </source>
</reference>
<protein>
    <recommendedName>
        <fullName>Sorting nexin-25</fullName>
    </recommendedName>
</protein>
<proteinExistence type="evidence at protein level"/>
<dbReference type="EMBL" id="AY601646">
    <property type="protein sequence ID" value="AAT98626.1"/>
    <property type="status" value="ALT_SEQ"/>
    <property type="molecule type" value="mRNA"/>
</dbReference>
<dbReference type="EMBL" id="AC114558">
    <property type="status" value="NOT_ANNOTATED_CDS"/>
    <property type="molecule type" value="Genomic_DNA"/>
</dbReference>
<dbReference type="EMBL" id="CJ047380">
    <property type="status" value="NOT_ANNOTATED_CDS"/>
    <property type="molecule type" value="mRNA"/>
</dbReference>
<dbReference type="EMBL" id="BC057063">
    <property type="protein sequence ID" value="AAH57063.1"/>
    <property type="molecule type" value="mRNA"/>
</dbReference>
<dbReference type="CCDS" id="CCDS22287.2"/>
<dbReference type="RefSeq" id="NP_997096.2">
    <property type="nucleotide sequence ID" value="NM_207213.3"/>
</dbReference>
<dbReference type="RefSeq" id="XP_006509306.1">
    <property type="nucleotide sequence ID" value="XM_006509243.3"/>
</dbReference>
<dbReference type="PDB" id="7WF8">
    <property type="method" value="X-ray"/>
    <property type="resolution" value="1.35 A"/>
    <property type="chains" value="A/B=280-402"/>
</dbReference>
<dbReference type="PDB" id="7WF9">
    <property type="method" value="X-ray"/>
    <property type="resolution" value="2.55 A"/>
    <property type="chains" value="A/B=280-405"/>
</dbReference>
<dbReference type="PDB" id="8HQL">
    <property type="method" value="X-ray"/>
    <property type="resolution" value="2.40 A"/>
    <property type="chains" value="A/B/C/D/E=506-624"/>
</dbReference>
<dbReference type="PDBsum" id="7WF8"/>
<dbReference type="PDBsum" id="7WF9"/>
<dbReference type="PDBsum" id="8HQL"/>
<dbReference type="SMR" id="Q3ZT31"/>
<dbReference type="BioGRID" id="221805">
    <property type="interactions" value="3"/>
</dbReference>
<dbReference type="FunCoup" id="Q3ZT31">
    <property type="interactions" value="2867"/>
</dbReference>
<dbReference type="STRING" id="10090.ENSMUSP00000035785"/>
<dbReference type="iPTMnet" id="Q3ZT31"/>
<dbReference type="PhosphoSitePlus" id="Q3ZT31"/>
<dbReference type="PaxDb" id="10090-ENSMUSP00000106007"/>
<dbReference type="ProteomicsDB" id="261542"/>
<dbReference type="Pumba" id="Q3ZT31"/>
<dbReference type="Antibodypedia" id="28920">
    <property type="antibodies" value="148 antibodies from 27 providers"/>
</dbReference>
<dbReference type="Ensembl" id="ENSMUST00000041582.15">
    <property type="protein sequence ID" value="ENSMUSP00000035785.9"/>
    <property type="gene ID" value="ENSMUSG00000038291.17"/>
</dbReference>
<dbReference type="Ensembl" id="ENSMUST00000170416.8">
    <property type="protein sequence ID" value="ENSMUSP00000127640.2"/>
    <property type="gene ID" value="ENSMUSG00000038291.17"/>
</dbReference>
<dbReference type="GeneID" id="102141"/>
<dbReference type="KEGG" id="mmu:102141"/>
<dbReference type="UCSC" id="uc009lpu.2">
    <property type="organism name" value="mouse"/>
</dbReference>
<dbReference type="AGR" id="MGI:2142610"/>
<dbReference type="CTD" id="83891"/>
<dbReference type="MGI" id="MGI:2142610">
    <property type="gene designation" value="Snx25"/>
</dbReference>
<dbReference type="VEuPathDB" id="HostDB:ENSMUSG00000038291"/>
<dbReference type="eggNOG" id="KOG2101">
    <property type="taxonomic scope" value="Eukaryota"/>
</dbReference>
<dbReference type="GeneTree" id="ENSGT00950000182856"/>
<dbReference type="HOGENOM" id="CLU_005899_0_1_1"/>
<dbReference type="InParanoid" id="Q3ZT31"/>
<dbReference type="BioGRID-ORCS" id="102141">
    <property type="hits" value="4 hits in 80 CRISPR screens"/>
</dbReference>
<dbReference type="ChiTaRS" id="Snx25">
    <property type="organism name" value="mouse"/>
</dbReference>
<dbReference type="PRO" id="PR:Q3ZT31"/>
<dbReference type="Proteomes" id="UP000000589">
    <property type="component" value="Chromosome 8"/>
</dbReference>
<dbReference type="RNAct" id="Q3ZT31">
    <property type="molecule type" value="protein"/>
</dbReference>
<dbReference type="Bgee" id="ENSMUSG00000038291">
    <property type="expression patterns" value="Expressed in spermatocyte and 219 other cell types or tissues"/>
</dbReference>
<dbReference type="ExpressionAtlas" id="Q3ZT31">
    <property type="expression patterns" value="baseline and differential"/>
</dbReference>
<dbReference type="GO" id="GO:0005768">
    <property type="term" value="C:endosome"/>
    <property type="evidence" value="ECO:0000314"/>
    <property type="project" value="UniProtKB"/>
</dbReference>
<dbReference type="GO" id="GO:0010008">
    <property type="term" value="C:endosome membrane"/>
    <property type="evidence" value="ECO:0007669"/>
    <property type="project" value="UniProtKB-SubCell"/>
</dbReference>
<dbReference type="GO" id="GO:0035091">
    <property type="term" value="F:phosphatidylinositol binding"/>
    <property type="evidence" value="ECO:0007669"/>
    <property type="project" value="InterPro"/>
</dbReference>
<dbReference type="GO" id="GO:0034713">
    <property type="term" value="F:type I transforming growth factor beta receptor binding"/>
    <property type="evidence" value="ECO:0000353"/>
    <property type="project" value="UniProtKB"/>
</dbReference>
<dbReference type="GO" id="GO:0030512">
    <property type="term" value="P:negative regulation of transforming growth factor beta receptor signaling pathway"/>
    <property type="evidence" value="ECO:0000314"/>
    <property type="project" value="UniProtKB"/>
</dbReference>
<dbReference type="GO" id="GO:0015031">
    <property type="term" value="P:protein transport"/>
    <property type="evidence" value="ECO:0007669"/>
    <property type="project" value="UniProtKB-KW"/>
</dbReference>
<dbReference type="GO" id="GO:0032801">
    <property type="term" value="P:receptor catabolic process"/>
    <property type="evidence" value="ECO:0000314"/>
    <property type="project" value="UniProtKB"/>
</dbReference>
<dbReference type="CDD" id="cd06878">
    <property type="entry name" value="PX_SNX25"/>
    <property type="match status" value="1"/>
</dbReference>
<dbReference type="Gene3D" id="3.30.1520.10">
    <property type="entry name" value="Phox-like domain"/>
    <property type="match status" value="1"/>
</dbReference>
<dbReference type="Gene3D" id="1.10.167.10">
    <property type="entry name" value="Regulator of G-protein Signalling 4, domain 2"/>
    <property type="match status" value="1"/>
</dbReference>
<dbReference type="InterPro" id="IPR003114">
    <property type="entry name" value="Phox_assoc"/>
</dbReference>
<dbReference type="InterPro" id="IPR001683">
    <property type="entry name" value="PX_dom"/>
</dbReference>
<dbReference type="InterPro" id="IPR036871">
    <property type="entry name" value="PX_dom_sf"/>
</dbReference>
<dbReference type="InterPro" id="IPR016137">
    <property type="entry name" value="RGS"/>
</dbReference>
<dbReference type="InterPro" id="IPR036305">
    <property type="entry name" value="RGS_sf"/>
</dbReference>
<dbReference type="InterPro" id="IPR044926">
    <property type="entry name" value="RGS_subdomain_2"/>
</dbReference>
<dbReference type="InterPro" id="IPR037899">
    <property type="entry name" value="SNX25_PX"/>
</dbReference>
<dbReference type="InterPro" id="IPR013937">
    <property type="entry name" value="Sorting_nexin_C"/>
</dbReference>
<dbReference type="PANTHER" id="PTHR22775">
    <property type="entry name" value="SORTING NEXIN"/>
    <property type="match status" value="1"/>
</dbReference>
<dbReference type="PANTHER" id="PTHR22775:SF48">
    <property type="entry name" value="SORTING NEXIN-25"/>
    <property type="match status" value="1"/>
</dbReference>
<dbReference type="Pfam" id="PF08628">
    <property type="entry name" value="Nexin_C"/>
    <property type="match status" value="1"/>
</dbReference>
<dbReference type="Pfam" id="PF00787">
    <property type="entry name" value="PX"/>
    <property type="match status" value="1"/>
</dbReference>
<dbReference type="Pfam" id="PF02194">
    <property type="entry name" value="PXA"/>
    <property type="match status" value="1"/>
</dbReference>
<dbReference type="Pfam" id="PF00615">
    <property type="entry name" value="RGS"/>
    <property type="match status" value="1"/>
</dbReference>
<dbReference type="SMART" id="SM00312">
    <property type="entry name" value="PX"/>
    <property type="match status" value="1"/>
</dbReference>
<dbReference type="SMART" id="SM00313">
    <property type="entry name" value="PXA"/>
    <property type="match status" value="1"/>
</dbReference>
<dbReference type="SMART" id="SM00315">
    <property type="entry name" value="RGS"/>
    <property type="match status" value="1"/>
</dbReference>
<dbReference type="SUPFAM" id="SSF64268">
    <property type="entry name" value="PX domain"/>
    <property type="match status" value="1"/>
</dbReference>
<dbReference type="SUPFAM" id="SSF48097">
    <property type="entry name" value="Regulator of G-protein signaling, RGS"/>
    <property type="match status" value="1"/>
</dbReference>
<dbReference type="PROSITE" id="PS50195">
    <property type="entry name" value="PX"/>
    <property type="match status" value="1"/>
</dbReference>
<dbReference type="PROSITE" id="PS51207">
    <property type="entry name" value="PXA"/>
    <property type="match status" value="1"/>
</dbReference>
<dbReference type="PROSITE" id="PS50132">
    <property type="entry name" value="RGS"/>
    <property type="match status" value="1"/>
</dbReference>